<proteinExistence type="inferred from homology"/>
<comment type="function">
    <text evidence="1">Forms part of the ribosomal stalk, playing a central role in the interaction of the ribosome with GTP-bound translation factors.</text>
</comment>
<comment type="subunit">
    <text evidence="1">Part of the ribosomal stalk of the 50S ribosomal subunit. The N-terminus interacts with L11 and the large rRNA to form the base of the stalk. The C-terminus forms an elongated spine to which L12 dimers bind in a sequential fashion forming a multimeric L10(L12)X complex.</text>
</comment>
<comment type="similarity">
    <text evidence="1">Belongs to the universal ribosomal protein uL10 family.</text>
</comment>
<feature type="chain" id="PRO_1000005507" description="Large ribosomal subunit protein uL10">
    <location>
        <begin position="1"/>
        <end position="163"/>
    </location>
</feature>
<gene>
    <name evidence="1" type="primary">rplJ</name>
    <name type="ordered locus">CGSHiGG_06460</name>
</gene>
<accession>A5UHD1</accession>
<dbReference type="EMBL" id="CP000672">
    <property type="protein sequence ID" value="ABR00187.1"/>
    <property type="molecule type" value="Genomic_DNA"/>
</dbReference>
<dbReference type="SMR" id="A5UHD1"/>
<dbReference type="KEGG" id="hiq:CGSHiGG_06460"/>
<dbReference type="HOGENOM" id="CLU_092227_0_2_6"/>
<dbReference type="Proteomes" id="UP000001990">
    <property type="component" value="Chromosome"/>
</dbReference>
<dbReference type="GO" id="GO:0015934">
    <property type="term" value="C:large ribosomal subunit"/>
    <property type="evidence" value="ECO:0007669"/>
    <property type="project" value="InterPro"/>
</dbReference>
<dbReference type="GO" id="GO:0070180">
    <property type="term" value="F:large ribosomal subunit rRNA binding"/>
    <property type="evidence" value="ECO:0007669"/>
    <property type="project" value="UniProtKB-UniRule"/>
</dbReference>
<dbReference type="GO" id="GO:0003735">
    <property type="term" value="F:structural constituent of ribosome"/>
    <property type="evidence" value="ECO:0007669"/>
    <property type="project" value="InterPro"/>
</dbReference>
<dbReference type="GO" id="GO:0006412">
    <property type="term" value="P:translation"/>
    <property type="evidence" value="ECO:0007669"/>
    <property type="project" value="UniProtKB-UniRule"/>
</dbReference>
<dbReference type="CDD" id="cd05797">
    <property type="entry name" value="Ribosomal_L10"/>
    <property type="match status" value="1"/>
</dbReference>
<dbReference type="FunFam" id="3.30.70.1730:FF:000001">
    <property type="entry name" value="50S ribosomal protein L10"/>
    <property type="match status" value="1"/>
</dbReference>
<dbReference type="Gene3D" id="3.30.70.1730">
    <property type="match status" value="1"/>
</dbReference>
<dbReference type="Gene3D" id="6.10.250.2350">
    <property type="match status" value="1"/>
</dbReference>
<dbReference type="HAMAP" id="MF_00362">
    <property type="entry name" value="Ribosomal_uL10"/>
    <property type="match status" value="1"/>
</dbReference>
<dbReference type="InterPro" id="IPR001790">
    <property type="entry name" value="Ribosomal_uL10"/>
</dbReference>
<dbReference type="InterPro" id="IPR043141">
    <property type="entry name" value="Ribosomal_uL10-like_sf"/>
</dbReference>
<dbReference type="InterPro" id="IPR022973">
    <property type="entry name" value="Ribosomal_uL10_bac"/>
</dbReference>
<dbReference type="InterPro" id="IPR047865">
    <property type="entry name" value="Ribosomal_uL10_bac_type"/>
</dbReference>
<dbReference type="InterPro" id="IPR002363">
    <property type="entry name" value="Ribosomal_uL10_CS_bac"/>
</dbReference>
<dbReference type="NCBIfam" id="NF000955">
    <property type="entry name" value="PRK00099.1-1"/>
    <property type="match status" value="1"/>
</dbReference>
<dbReference type="PANTHER" id="PTHR11560">
    <property type="entry name" value="39S RIBOSOMAL PROTEIN L10, MITOCHONDRIAL"/>
    <property type="match status" value="1"/>
</dbReference>
<dbReference type="Pfam" id="PF00466">
    <property type="entry name" value="Ribosomal_L10"/>
    <property type="match status" value="1"/>
</dbReference>
<dbReference type="SUPFAM" id="SSF160369">
    <property type="entry name" value="Ribosomal protein L10-like"/>
    <property type="match status" value="1"/>
</dbReference>
<dbReference type="PROSITE" id="PS01109">
    <property type="entry name" value="RIBOSOMAL_L10"/>
    <property type="match status" value="1"/>
</dbReference>
<sequence>MALNLQDKQAIVAEVNEAAKGALSAVIADSRGVTVEKMTELRKSAREAGVTMRVVRNTLLRRAVEGTDYECLKDTFVGPTLIAFSNEHPGAAARLFKEFAKANDKFEIKGAAFEGKIQDVEFLATLPTYEEAIARLMGTMKEAAAGKLARTLAALRDKLQEAA</sequence>
<organism>
    <name type="scientific">Haemophilus influenzae (strain PittGG)</name>
    <dbReference type="NCBI Taxonomy" id="374931"/>
    <lineage>
        <taxon>Bacteria</taxon>
        <taxon>Pseudomonadati</taxon>
        <taxon>Pseudomonadota</taxon>
        <taxon>Gammaproteobacteria</taxon>
        <taxon>Pasteurellales</taxon>
        <taxon>Pasteurellaceae</taxon>
        <taxon>Haemophilus</taxon>
    </lineage>
</organism>
<protein>
    <recommendedName>
        <fullName evidence="1">Large ribosomal subunit protein uL10</fullName>
    </recommendedName>
    <alternativeName>
        <fullName evidence="2">50S ribosomal protein L10</fullName>
    </alternativeName>
</protein>
<evidence type="ECO:0000255" key="1">
    <source>
        <dbReference type="HAMAP-Rule" id="MF_00362"/>
    </source>
</evidence>
<evidence type="ECO:0000305" key="2"/>
<reference key="1">
    <citation type="journal article" date="2007" name="Genome Biol.">
        <title>Characterization and modeling of the Haemophilus influenzae core and supragenomes based on the complete genomic sequences of Rd and 12 clinical nontypeable strains.</title>
        <authorList>
            <person name="Hogg J.S."/>
            <person name="Hu F.Z."/>
            <person name="Janto B."/>
            <person name="Boissy R."/>
            <person name="Hayes J."/>
            <person name="Keefe R."/>
            <person name="Post J.C."/>
            <person name="Ehrlich G.D."/>
        </authorList>
    </citation>
    <scope>NUCLEOTIDE SEQUENCE [LARGE SCALE GENOMIC DNA]</scope>
    <source>
        <strain>PittGG</strain>
    </source>
</reference>
<keyword id="KW-0687">Ribonucleoprotein</keyword>
<keyword id="KW-0689">Ribosomal protein</keyword>
<keyword id="KW-0694">RNA-binding</keyword>
<keyword id="KW-0699">rRNA-binding</keyword>
<name>RL10_HAEIG</name>